<evidence type="ECO:0000250" key="1"/>
<evidence type="ECO:0000255" key="2"/>
<evidence type="ECO:0000305" key="3"/>
<name>NHAA_RICRS</name>
<protein>
    <recommendedName>
        <fullName>Putative Na(+)/H(+) antiporter NhaA homolog</fullName>
    </recommendedName>
</protein>
<reference key="1">
    <citation type="submission" date="2007-09" db="EMBL/GenBank/DDBJ databases">
        <title>Complete genome sequence of Rickettsia rickettsii.</title>
        <authorList>
            <person name="Madan A."/>
            <person name="Fahey J."/>
            <person name="Helton E."/>
            <person name="Ketteman M."/>
            <person name="Madan A."/>
            <person name="Rodrigues S."/>
            <person name="Sanchez A."/>
            <person name="Dasch G."/>
            <person name="Eremeeva M."/>
        </authorList>
    </citation>
    <scope>NUCLEOTIDE SEQUENCE [LARGE SCALE GENOMIC DNA]</scope>
    <source>
        <strain>Sheila Smith</strain>
    </source>
</reference>
<organism>
    <name type="scientific">Rickettsia rickettsii (strain Sheila Smith)</name>
    <dbReference type="NCBI Taxonomy" id="392021"/>
    <lineage>
        <taxon>Bacteria</taxon>
        <taxon>Pseudomonadati</taxon>
        <taxon>Pseudomonadota</taxon>
        <taxon>Alphaproteobacteria</taxon>
        <taxon>Rickettsiales</taxon>
        <taxon>Rickettsiaceae</taxon>
        <taxon>Rickettsieae</taxon>
        <taxon>Rickettsia</taxon>
        <taxon>spotted fever group</taxon>
    </lineage>
</organism>
<sequence length="266" mass="29808">MNIKKLILPAAAALGGVVIPVLIYMFFNYGKPELIKGWAIPIATDTAFVLGILSFFSRHISLELRAFIIGFSLIDDAFALIILALFYAKTINTLALLISSIIIFILFILNYRQVKQLFYYIIVGLLLCISMVKSGIHDTLCRAIIALFIPVNIKGEFNTSFKKLENLIRPFVNYFILPLFVFMNSGILLEYFAFKGICSNSILALIYGIIFGLSVGKQLGIMLFSYPFVKFKLCNLPSDTSWLKFYSIAILRGIGFTLSLFIGSNV</sequence>
<gene>
    <name type="primary">nhaA</name>
    <name type="ordered locus">A1G_07435</name>
</gene>
<keyword id="KW-0997">Cell inner membrane</keyword>
<keyword id="KW-1003">Cell membrane</keyword>
<keyword id="KW-0472">Membrane</keyword>
<keyword id="KW-0812">Transmembrane</keyword>
<keyword id="KW-1133">Transmembrane helix</keyword>
<comment type="subcellular location">
    <subcellularLocation>
        <location evidence="1">Cell inner membrane</location>
        <topology evidence="1">Multi-pass membrane protein</topology>
    </subcellularLocation>
</comment>
<comment type="similarity">
    <text evidence="3">Belongs to the NhaA Na(+)/H(+) (TC 2.A.33) antiporter family.</text>
</comment>
<comment type="caution">
    <text evidence="3">Could be the product of a pseudogene. This sequence is shorter than orthologs.</text>
</comment>
<feature type="chain" id="PRO_0000334402" description="Putative Na(+)/H(+) antiporter NhaA homolog">
    <location>
        <begin position="1"/>
        <end position="266"/>
    </location>
</feature>
<feature type="transmembrane region" description="Helical" evidence="2">
    <location>
        <begin position="7"/>
        <end position="27"/>
    </location>
</feature>
<feature type="transmembrane region" description="Helical" evidence="2">
    <location>
        <begin position="37"/>
        <end position="57"/>
    </location>
</feature>
<feature type="transmembrane region" description="Helical" evidence="2">
    <location>
        <begin position="66"/>
        <end position="86"/>
    </location>
</feature>
<feature type="transmembrane region" description="Helical" evidence="2">
    <location>
        <begin position="91"/>
        <end position="111"/>
    </location>
</feature>
<feature type="transmembrane region" description="Helical" evidence="2">
    <location>
        <begin position="117"/>
        <end position="137"/>
    </location>
</feature>
<feature type="transmembrane region" description="Helical" evidence="2">
    <location>
        <begin position="174"/>
        <end position="194"/>
    </location>
</feature>
<feature type="transmembrane region" description="Helical" evidence="2">
    <location>
        <begin position="202"/>
        <end position="222"/>
    </location>
</feature>
<feature type="transmembrane region" description="Helical" evidence="2">
    <location>
        <begin position="242"/>
        <end position="262"/>
    </location>
</feature>
<dbReference type="EMBL" id="CP000848">
    <property type="protein sequence ID" value="ABV76926.1"/>
    <property type="molecule type" value="Genomic_DNA"/>
</dbReference>
<dbReference type="SMR" id="A8GU51"/>
<dbReference type="KEGG" id="rri:A1G_07435"/>
<dbReference type="HOGENOM" id="CLU_015803_1_0_5"/>
<dbReference type="Proteomes" id="UP000006832">
    <property type="component" value="Chromosome"/>
</dbReference>
<dbReference type="GO" id="GO:0005886">
    <property type="term" value="C:plasma membrane"/>
    <property type="evidence" value="ECO:0007669"/>
    <property type="project" value="UniProtKB-SubCell"/>
</dbReference>
<dbReference type="GO" id="GO:0015385">
    <property type="term" value="F:sodium:proton antiporter activity"/>
    <property type="evidence" value="ECO:0007669"/>
    <property type="project" value="TreeGrafter"/>
</dbReference>
<dbReference type="GO" id="GO:0006885">
    <property type="term" value="P:regulation of pH"/>
    <property type="evidence" value="ECO:0007669"/>
    <property type="project" value="InterPro"/>
</dbReference>
<dbReference type="Gene3D" id="1.20.1530.10">
    <property type="entry name" value="Na+/H+ antiporter like domain"/>
    <property type="match status" value="1"/>
</dbReference>
<dbReference type="InterPro" id="IPR023171">
    <property type="entry name" value="Na/H_antiporter_dom_sf"/>
</dbReference>
<dbReference type="InterPro" id="IPR004670">
    <property type="entry name" value="NhaA"/>
</dbReference>
<dbReference type="PANTHER" id="PTHR30341:SF0">
    <property type="entry name" value="NA(+)_H(+) ANTIPORTER NHAA"/>
    <property type="match status" value="1"/>
</dbReference>
<dbReference type="PANTHER" id="PTHR30341">
    <property type="entry name" value="SODIUM ION/PROTON ANTIPORTER NHAA-RELATED"/>
    <property type="match status" value="1"/>
</dbReference>
<dbReference type="Pfam" id="PF06965">
    <property type="entry name" value="Na_H_antiport_1"/>
    <property type="match status" value="1"/>
</dbReference>
<accession>A8GU51</accession>
<proteinExistence type="uncertain"/>